<evidence type="ECO:0000255" key="1">
    <source>
        <dbReference type="HAMAP-Rule" id="MF_00236"/>
    </source>
</evidence>
<evidence type="ECO:0000256" key="2">
    <source>
        <dbReference type="SAM" id="MobiDB-lite"/>
    </source>
</evidence>
<protein>
    <recommendedName>
        <fullName evidence="1">Sec-independent protein translocase protein TatA</fullName>
    </recommendedName>
</protein>
<organism>
    <name type="scientific">Gluconobacter oxydans (strain 621H)</name>
    <name type="common">Gluconobacter suboxydans</name>
    <dbReference type="NCBI Taxonomy" id="290633"/>
    <lineage>
        <taxon>Bacteria</taxon>
        <taxon>Pseudomonadati</taxon>
        <taxon>Pseudomonadota</taxon>
        <taxon>Alphaproteobacteria</taxon>
        <taxon>Acetobacterales</taxon>
        <taxon>Acetobacteraceae</taxon>
        <taxon>Gluconobacter</taxon>
    </lineage>
</organism>
<accession>Q5FRJ4</accession>
<name>TATA_GLUOX</name>
<comment type="function">
    <text evidence="1">Part of the twin-arginine translocation (Tat) system that transports large folded proteins containing a characteristic twin-arginine motif in their signal peptide across membranes. TatA could form the protein-conducting channel of the Tat system.</text>
</comment>
<comment type="subunit">
    <text evidence="1">The Tat system comprises two distinct complexes: a TatABC complex, containing multiple copies of TatA, TatB and TatC subunits, and a separate TatA complex, containing only TatA subunits. Substrates initially bind to the TatABC complex, which probably triggers association of the separate TatA complex to form the active translocon.</text>
</comment>
<comment type="subcellular location">
    <subcellularLocation>
        <location evidence="1">Cell inner membrane</location>
        <topology evidence="1">Single-pass membrane protein</topology>
    </subcellularLocation>
</comment>
<comment type="similarity">
    <text evidence="1">Belongs to the TatA/E family.</text>
</comment>
<sequence>MGSMSPVHWLILAVVLLVVFGGGGKISGLMGDFAKGIKSFKKNMADDESMTATDATQAPGHISPPNQNPGYSQTTSSETHRNQV</sequence>
<reference key="1">
    <citation type="journal article" date="2005" name="Nat. Biotechnol.">
        <title>Complete genome sequence of the acetic acid bacterium Gluconobacter oxydans.</title>
        <authorList>
            <person name="Prust C."/>
            <person name="Hoffmeister M."/>
            <person name="Liesegang H."/>
            <person name="Wiezer A."/>
            <person name="Fricke W.F."/>
            <person name="Ehrenreich A."/>
            <person name="Gottschalk G."/>
            <person name="Deppenmeier U."/>
        </authorList>
    </citation>
    <scope>NUCLEOTIDE SEQUENCE [LARGE SCALE GENOMIC DNA]</scope>
    <source>
        <strain>621H</strain>
    </source>
</reference>
<keyword id="KW-0997">Cell inner membrane</keyword>
<keyword id="KW-1003">Cell membrane</keyword>
<keyword id="KW-0472">Membrane</keyword>
<keyword id="KW-0653">Protein transport</keyword>
<keyword id="KW-1185">Reference proteome</keyword>
<keyword id="KW-0811">Translocation</keyword>
<keyword id="KW-0812">Transmembrane</keyword>
<keyword id="KW-1133">Transmembrane helix</keyword>
<keyword id="KW-0813">Transport</keyword>
<proteinExistence type="inferred from homology"/>
<gene>
    <name evidence="1" type="primary">tatA</name>
    <name type="ordered locus">GOX1241</name>
</gene>
<feature type="chain" id="PRO_1000058960" description="Sec-independent protein translocase protein TatA">
    <location>
        <begin position="1"/>
        <end position="84"/>
    </location>
</feature>
<feature type="transmembrane region" description="Helical" evidence="1">
    <location>
        <begin position="4"/>
        <end position="24"/>
    </location>
</feature>
<feature type="region of interest" description="Disordered" evidence="2">
    <location>
        <begin position="46"/>
        <end position="84"/>
    </location>
</feature>
<feature type="compositionally biased region" description="Polar residues" evidence="2">
    <location>
        <begin position="64"/>
        <end position="77"/>
    </location>
</feature>
<dbReference type="EMBL" id="CP000009">
    <property type="protein sequence ID" value="AAW61002.1"/>
    <property type="molecule type" value="Genomic_DNA"/>
</dbReference>
<dbReference type="RefSeq" id="WP_011252794.1">
    <property type="nucleotide sequence ID" value="NZ_LT900338.1"/>
</dbReference>
<dbReference type="SMR" id="Q5FRJ4"/>
<dbReference type="STRING" id="290633.GOX1241"/>
<dbReference type="KEGG" id="gox:GOX1241"/>
<dbReference type="eggNOG" id="COG1826">
    <property type="taxonomic scope" value="Bacteria"/>
</dbReference>
<dbReference type="HOGENOM" id="CLU_086034_5_0_5"/>
<dbReference type="Proteomes" id="UP000006375">
    <property type="component" value="Chromosome"/>
</dbReference>
<dbReference type="GO" id="GO:0033281">
    <property type="term" value="C:TAT protein transport complex"/>
    <property type="evidence" value="ECO:0007669"/>
    <property type="project" value="UniProtKB-UniRule"/>
</dbReference>
<dbReference type="GO" id="GO:0008320">
    <property type="term" value="F:protein transmembrane transporter activity"/>
    <property type="evidence" value="ECO:0007669"/>
    <property type="project" value="UniProtKB-UniRule"/>
</dbReference>
<dbReference type="GO" id="GO:0043953">
    <property type="term" value="P:protein transport by the Tat complex"/>
    <property type="evidence" value="ECO:0007669"/>
    <property type="project" value="UniProtKB-UniRule"/>
</dbReference>
<dbReference type="Gene3D" id="1.20.5.3310">
    <property type="match status" value="1"/>
</dbReference>
<dbReference type="HAMAP" id="MF_00236">
    <property type="entry name" value="TatA_E"/>
    <property type="match status" value="1"/>
</dbReference>
<dbReference type="InterPro" id="IPR003369">
    <property type="entry name" value="TatA/B/E"/>
</dbReference>
<dbReference type="InterPro" id="IPR006312">
    <property type="entry name" value="TatA/E"/>
</dbReference>
<dbReference type="PANTHER" id="PTHR42982">
    <property type="entry name" value="SEC-INDEPENDENT PROTEIN TRANSLOCASE PROTEIN TATA"/>
    <property type="match status" value="1"/>
</dbReference>
<dbReference type="PANTHER" id="PTHR42982:SF1">
    <property type="entry name" value="SEC-INDEPENDENT PROTEIN TRANSLOCASE PROTEIN TATA"/>
    <property type="match status" value="1"/>
</dbReference>
<dbReference type="Pfam" id="PF02416">
    <property type="entry name" value="TatA_B_E"/>
    <property type="match status" value="1"/>
</dbReference>